<reference key="1">
    <citation type="journal article" date="2011" name="PLoS Pathog.">
        <title>Comparative genomics yields insights into niche adaptation of plant vascular wilt pathogens.</title>
        <authorList>
            <person name="Klosterman S.J."/>
            <person name="Subbarao K.V."/>
            <person name="Kang S."/>
            <person name="Veronese P."/>
            <person name="Gold S.E."/>
            <person name="Thomma B.P.H.J."/>
            <person name="Chen Z."/>
            <person name="Henrissat B."/>
            <person name="Lee Y.-H."/>
            <person name="Park J."/>
            <person name="Garcia-Pedrajas M.D."/>
            <person name="Barbara D.J."/>
            <person name="Anchieta A."/>
            <person name="de Jonge R."/>
            <person name="Santhanam P."/>
            <person name="Maruthachalam K."/>
            <person name="Atallah Z."/>
            <person name="Amyotte S.G."/>
            <person name="Paz Z."/>
            <person name="Inderbitzin P."/>
            <person name="Hayes R.J."/>
            <person name="Heiman D.I."/>
            <person name="Young S."/>
            <person name="Zeng Q."/>
            <person name="Engels R."/>
            <person name="Galagan J."/>
            <person name="Cuomo C.A."/>
            <person name="Dobinson K.F."/>
            <person name="Ma L.-J."/>
        </authorList>
    </citation>
    <scope>NUCLEOTIDE SEQUENCE [LARGE SCALE GENOMIC DNA]</scope>
    <source>
        <strain>VaMs.102 / ATCC MYA-4576 / FGSC 10136</strain>
    </source>
</reference>
<organism>
    <name type="scientific">Verticillium alfalfae (strain VaMs.102 / ATCC MYA-4576 / FGSC 10136)</name>
    <name type="common">Verticillium wilt of alfalfa</name>
    <name type="synonym">Verticillium albo-atrum</name>
    <dbReference type="NCBI Taxonomy" id="526221"/>
    <lineage>
        <taxon>Eukaryota</taxon>
        <taxon>Fungi</taxon>
        <taxon>Dikarya</taxon>
        <taxon>Ascomycota</taxon>
        <taxon>Pezizomycotina</taxon>
        <taxon>Sordariomycetes</taxon>
        <taxon>Hypocreomycetidae</taxon>
        <taxon>Glomerellales</taxon>
        <taxon>Plectosphaerellaceae</taxon>
        <taxon>Verticillium</taxon>
    </lineage>
</organism>
<proteinExistence type="inferred from homology"/>
<dbReference type="EMBL" id="DS985220">
    <property type="protein sequence ID" value="EEY19877.1"/>
    <property type="molecule type" value="Genomic_DNA"/>
</dbReference>
<dbReference type="RefSeq" id="XP_003003544.1">
    <property type="nucleotide sequence ID" value="XM_003003498.1"/>
</dbReference>
<dbReference type="SMR" id="C9SM62"/>
<dbReference type="STRING" id="526221.C9SM62"/>
<dbReference type="GlyCosmos" id="C9SM62">
    <property type="glycosylation" value="4 sites, No reported glycans"/>
</dbReference>
<dbReference type="GeneID" id="9536344"/>
<dbReference type="KEGG" id="val:VDBG_05986"/>
<dbReference type="eggNOG" id="KOG3511">
    <property type="taxonomic scope" value="Eukaryota"/>
</dbReference>
<dbReference type="HOGENOM" id="CLU_000700_0_0_1"/>
<dbReference type="OMA" id="ATMSEFI"/>
<dbReference type="OrthoDB" id="443634at2759"/>
<dbReference type="Proteomes" id="UP000008698">
    <property type="component" value="Unassembled WGS sequence"/>
</dbReference>
<dbReference type="GO" id="GO:0005829">
    <property type="term" value="C:cytosol"/>
    <property type="evidence" value="ECO:0007669"/>
    <property type="project" value="GOC"/>
</dbReference>
<dbReference type="GO" id="GO:0005794">
    <property type="term" value="C:Golgi apparatus"/>
    <property type="evidence" value="ECO:0007669"/>
    <property type="project" value="UniProtKB-SubCell"/>
</dbReference>
<dbReference type="GO" id="GO:0016020">
    <property type="term" value="C:membrane"/>
    <property type="evidence" value="ECO:0007669"/>
    <property type="project" value="UniProtKB-KW"/>
</dbReference>
<dbReference type="GO" id="GO:0006895">
    <property type="term" value="P:Golgi to endosome transport"/>
    <property type="evidence" value="ECO:0007669"/>
    <property type="project" value="TreeGrafter"/>
</dbReference>
<dbReference type="GO" id="GO:0006896">
    <property type="term" value="P:Golgi to vacuole transport"/>
    <property type="evidence" value="ECO:0007669"/>
    <property type="project" value="TreeGrafter"/>
</dbReference>
<dbReference type="GO" id="GO:0006623">
    <property type="term" value="P:protein targeting to vacuole"/>
    <property type="evidence" value="ECO:0007669"/>
    <property type="project" value="TreeGrafter"/>
</dbReference>
<dbReference type="CDD" id="cd15482">
    <property type="entry name" value="Sialidase_non-viral"/>
    <property type="match status" value="1"/>
</dbReference>
<dbReference type="FunFam" id="3.30.60.270:FF:000005">
    <property type="entry name" value="Sortilin"/>
    <property type="match status" value="2"/>
</dbReference>
<dbReference type="Gene3D" id="3.30.60.270">
    <property type="match status" value="2"/>
</dbReference>
<dbReference type="Gene3D" id="2.130.10.10">
    <property type="entry name" value="YVTN repeat-like/Quinoprotein amine dehydrogenase"/>
    <property type="match status" value="1"/>
</dbReference>
<dbReference type="InterPro" id="IPR031777">
    <property type="entry name" value="Sortilin_C"/>
</dbReference>
<dbReference type="InterPro" id="IPR031778">
    <property type="entry name" value="Sortilin_N"/>
</dbReference>
<dbReference type="InterPro" id="IPR006581">
    <property type="entry name" value="VPS10"/>
</dbReference>
<dbReference type="InterPro" id="IPR050310">
    <property type="entry name" value="VPS10-sortilin"/>
</dbReference>
<dbReference type="InterPro" id="IPR015943">
    <property type="entry name" value="WD40/YVTN_repeat-like_dom_sf"/>
</dbReference>
<dbReference type="PANTHER" id="PTHR12106">
    <property type="entry name" value="SORTILIN RELATED"/>
    <property type="match status" value="1"/>
</dbReference>
<dbReference type="PANTHER" id="PTHR12106:SF27">
    <property type="entry name" value="SORTILIN-RELATED RECEPTOR"/>
    <property type="match status" value="1"/>
</dbReference>
<dbReference type="Pfam" id="PF15902">
    <property type="entry name" value="Sortilin-Vps10"/>
    <property type="match status" value="2"/>
</dbReference>
<dbReference type="Pfam" id="PF15901">
    <property type="entry name" value="Sortilin_C"/>
    <property type="match status" value="2"/>
</dbReference>
<dbReference type="SMART" id="SM00602">
    <property type="entry name" value="VPS10"/>
    <property type="match status" value="2"/>
</dbReference>
<dbReference type="SUPFAM" id="SSF110296">
    <property type="entry name" value="Oligoxyloglucan reducing end-specific cellobiohydrolase"/>
    <property type="match status" value="2"/>
</dbReference>
<feature type="signal peptide" evidence="2">
    <location>
        <begin position="1"/>
        <end position="26"/>
    </location>
</feature>
<feature type="chain" id="PRO_0000407542" description="Vacuolar protein sorting/targeting protein 10">
    <location>
        <begin position="27"/>
        <end position="1447"/>
    </location>
</feature>
<feature type="topological domain" description="Lumenal" evidence="2">
    <location>
        <begin position="27"/>
        <end position="1314"/>
    </location>
</feature>
<feature type="transmembrane region" description="Helical" evidence="2">
    <location>
        <begin position="1315"/>
        <end position="1335"/>
    </location>
</feature>
<feature type="topological domain" description="Cytoplasmic" evidence="2">
    <location>
        <begin position="1336"/>
        <end position="1364"/>
    </location>
</feature>
<feature type="transmembrane region" description="Helical" evidence="2">
    <location>
        <begin position="1365"/>
        <end position="1385"/>
    </location>
</feature>
<feature type="topological domain" description="Lumenal" evidence="2">
    <location>
        <begin position="1386"/>
        <end position="1447"/>
    </location>
</feature>
<feature type="repeat" description="BNR 1">
    <location>
        <begin position="65"/>
        <end position="74"/>
    </location>
</feature>
<feature type="repeat" description="BNR 2">
    <location>
        <begin position="108"/>
        <end position="119"/>
    </location>
</feature>
<feature type="repeat" description="BNR 3">
    <location>
        <begin position="386"/>
        <end position="396"/>
    </location>
</feature>
<feature type="repeat" description="BNR 4">
    <location>
        <begin position="447"/>
        <end position="458"/>
    </location>
</feature>
<feature type="repeat" description="BNR 5">
    <location>
        <begin position="491"/>
        <end position="500"/>
    </location>
</feature>
<feature type="repeat" description="BNR 6">
    <location>
        <begin position="723"/>
        <end position="733"/>
    </location>
</feature>
<feature type="repeat" description="BNR 7">
    <location>
        <begin position="820"/>
        <end position="829"/>
    </location>
</feature>
<feature type="repeat" description="BNR 8">
    <location>
        <begin position="1103"/>
        <end position="1113"/>
    </location>
</feature>
<feature type="region of interest" description="Disordered" evidence="3">
    <location>
        <begin position="1426"/>
        <end position="1447"/>
    </location>
</feature>
<feature type="compositionally biased region" description="Acidic residues" evidence="3">
    <location>
        <begin position="1430"/>
        <end position="1447"/>
    </location>
</feature>
<feature type="glycosylation site" description="N-linked (GlcNAc...) asparagine" evidence="2">
    <location>
        <position position="306"/>
    </location>
</feature>
<feature type="glycosylation site" description="N-linked (GlcNAc...) asparagine" evidence="2">
    <location>
        <position position="331"/>
    </location>
</feature>
<feature type="glycosylation site" description="N-linked (GlcNAc...) asparagine" evidence="2">
    <location>
        <position position="864"/>
    </location>
</feature>
<feature type="glycosylation site" description="N-linked (GlcNAc...) asparagine" evidence="2">
    <location>
        <position position="973"/>
    </location>
</feature>
<accession>C9SM62</accession>
<protein>
    <recommendedName>
        <fullName>Vacuolar protein sorting/targeting protein 10</fullName>
    </recommendedName>
    <alternativeName>
        <fullName>Carboxypeptidase Y receptor</fullName>
        <shortName>CPY receptor</shortName>
    </alternativeName>
    <alternativeName>
        <fullName>Sortilin VPS10</fullName>
    </alternativeName>
    <alternativeName>
        <fullName>Vacuolar carboxypeptidase sorting receptor VPS10</fullName>
    </alternativeName>
</protein>
<keyword id="KW-0325">Glycoprotein</keyword>
<keyword id="KW-0333">Golgi apparatus</keyword>
<keyword id="KW-0472">Membrane</keyword>
<keyword id="KW-0653">Protein transport</keyword>
<keyword id="KW-0675">Receptor</keyword>
<keyword id="KW-1185">Reference proteome</keyword>
<keyword id="KW-0677">Repeat</keyword>
<keyword id="KW-0732">Signal</keyword>
<keyword id="KW-0812">Transmembrane</keyword>
<keyword id="KW-1133">Transmembrane helix</keyword>
<keyword id="KW-0813">Transport</keyword>
<evidence type="ECO:0000250" key="1"/>
<evidence type="ECO:0000255" key="2"/>
<evidence type="ECO:0000256" key="3">
    <source>
        <dbReference type="SAM" id="MobiDB-lite"/>
    </source>
</evidence>
<evidence type="ECO:0000305" key="4"/>
<comment type="function">
    <text evidence="1">Functions as a sorting receptor in the Golgi compartment required for the intracellular sorting and delivery of soluble vacuolar proteins, like carboxypeptidase Y (CPY) and proteinase A. Executes multiple rounds of sorting by cycling between the late Golgi and a prevacuolar endosome-like compartment (By similarity).</text>
</comment>
<comment type="subcellular location">
    <subcellularLocation>
        <location evidence="1">Golgi apparatus</location>
        <location evidence="1">trans-Golgi network membrane</location>
        <topology evidence="1">Multi-pass membrane protein</topology>
    </subcellularLocation>
    <subcellularLocation>
        <location evidence="1">Prevacuolar compartment membrane</location>
        <topology evidence="1">Multi-pass membrane protein</topology>
    </subcellularLocation>
    <text evidence="1">Cycles between the Golgi apparatus and the prevacuolar compartment.</text>
</comment>
<comment type="similarity">
    <text evidence="4">Belongs to the VPS10-related sortilin family.</text>
</comment>
<sequence length="1447" mass="161426">MRIWGRGAASWRTLLFVLSWTTTTLAKDDGPTIKVSKFKHPPLNMNYFEDSDVVLFHDMSENNIYRSDDAGVSWGKVAGVPDGVAYTLAMHEFDNSRAFIITDRREHFKTTDRGKSWEKFDSAAQTSRYRDQILSFHAGDPDRVIFNGMDCAGIFCNEVATYTTNNFKEAKTLRGSTEGCWWAKSSELFTTGKDDLDRQRVLCIGADSISPFKEDQRLFISDNFFEKIDGQVQQFEPNLDTNHGIQGVVNLAVVKKYLLVATTSINTDEMSLFVTDDTLKWHRAMFPAAHGHKVNQGAYTVLEGTNYSIQVDVMNTRPSNPMGVMFTSNSNGTFFVENLEHTNRNERGNVDFEKISGIQGIFLVNTVKNWEDVEKHGGSRKEVVTQITFDDGRTFHDIKAGDDRVHLHSVTHLDNVGRVFSSPAPGLVMGVGNTGGSLNDFEEGNLFVSDDAGASWKKALDGPHKYEFGDQGSLLVAVKDSKKDDVGEVSYSLDHGLNWKTAALPDGLKLKPEIITTTQDSTSLKFILVGSSGGDNYHVVALDFGGLQEKTCEDNDMEDWPARDADCFLKKEFKDPIPKTEDCECSDADFECDYNFIRKDGECEKAGPIVAPDEACKNAGPDTSFKGSSGWRLIPGNTCKRKDGSQKDDPVDRKCSDVVNSPAPPASGDITATQHIFKDTKLNDFEKIYLERGDSSSDSDETVIARAVEYENDGSMRVEQRVYRTRDHGKKWDEILEKEEIRGIYPHQYFKDAVFFTTKSRKVWYTIDRAEHFHEFEAPSDPGSGNPLSFHPDKKDWLIWVGQKCEKVDGKEQCFKEASISRDRGDNWRTALRYVQKCEFTGRSTYKFRDMRQIVCLTHKREDNESDNPKVIVSSNDFFEEDKQVRESNVKDFATMAEFIVVAAEDKEQKGLRALASLDGETYAAAHFPYNFEVSHQNAYTVLDSSTHAVNLFVATQLEKNQRQGSILKSNSNGTSYVMSAPKVNCDNNYFVDFEKIIGLEGVVLINSVTGKDKKGNKILRTEISHNDGSQWAYLPPPKADVNGKAYGCSSTYGDEKCALHLHHYTERLDKKKTFSAASVAGLMFGYGNIGSSLGPIEEADTFMTTDAGITWKSVKKGAWTWQYGDQGSIVVLVPRSTEDKKAKTKSISYTTNEGKDWKDFEFSQEEVTILDITSIRTGSSRNFLLWCRSSDGKTFSVNLDFTGLTDRPCVNPESGDSDYYLWSPTHPLQDNECDYNFELDPHKQCSLVPGKKPLSAEQYCKENPDAVSYYEPTGYRRIPLTTCVGGTELDKISEAHPCKGKEEEFEKLRGTSGVAIFFAIVIPIGIAAAVGWWVWRNYGSQFGQIRLGESSGFDNDAPWVKYPVIAVSAAVAVVAALPLLGSALWRTASSAYERVSGGGSGGGSWLNGGGQRRFTTRDSFARGRGDYASVDDDEGELLGDDSDEEV</sequence>
<name>VPS10_VERA1</name>
<gene>
    <name type="primary">VPS10</name>
    <name type="ORF">VDBG_05986</name>
</gene>